<sequence>MIERYSREEMSNIWTDQNRYEAWLEVEILACEAWSELGHIPKADVQKIRQNAKVNVERAQEIEQETRHDVVAFTRQVSETLGEERKWVHYGLTSTDVVDTALSFVIKQANDIIEKDLERFIDVLAEKAKNYKYTLMMGRTHGVHAEPTTFGVKMALWYTEMQRNLQRFKQVREEIEVGKMSGAVGTFANIPPEIESYVCKHLGIGTAPVSTQTLQRDRHAYYIATLALIATSLEKFAVEIRNLQKTETREVEEAFAKGQKGSSAMPHKRNPIGSENITGISRVIRGYITTAYENVPLWHERDISHSSAERIMLPDVTIALDYALNRFTNIVDRLTVFEDNMRNNIDKTFGLIFSQRVLLALINKGMVREEAYDKVQPKAMISWETKTPFRELIEQDESITSVLTKEELDECFDPKHHLNQVDTIFERAGLA</sequence>
<proteinExistence type="inferred from homology"/>
<accession>Q99SX9</accession>
<evidence type="ECO:0000250" key="1"/>
<evidence type="ECO:0000250" key="2">
    <source>
        <dbReference type="UniProtKB" id="P0AB89"/>
    </source>
</evidence>
<evidence type="ECO:0000305" key="3"/>
<dbReference type="EC" id="4.3.2.2" evidence="2"/>
<dbReference type="EMBL" id="BA000017">
    <property type="protein sequence ID" value="BAB58070.1"/>
    <property type="molecule type" value="Genomic_DNA"/>
</dbReference>
<dbReference type="RefSeq" id="WP_000572878.1">
    <property type="nucleotide sequence ID" value="NC_002758.2"/>
</dbReference>
<dbReference type="SMR" id="Q99SX9"/>
<dbReference type="KEGG" id="sav:SAV1908"/>
<dbReference type="HOGENOM" id="CLU_030949_0_1_9"/>
<dbReference type="PhylomeDB" id="Q99SX9"/>
<dbReference type="UniPathway" id="UPA00074">
    <property type="reaction ID" value="UER00132"/>
</dbReference>
<dbReference type="UniPathway" id="UPA00075">
    <property type="reaction ID" value="UER00336"/>
</dbReference>
<dbReference type="Proteomes" id="UP000002481">
    <property type="component" value="Chromosome"/>
</dbReference>
<dbReference type="GO" id="GO:0005829">
    <property type="term" value="C:cytosol"/>
    <property type="evidence" value="ECO:0007669"/>
    <property type="project" value="TreeGrafter"/>
</dbReference>
<dbReference type="GO" id="GO:0070626">
    <property type="term" value="F:(S)-2-(5-amino-1-(5-phospho-D-ribosyl)imidazole-4-carboxamido) succinate lyase (fumarate-forming) activity"/>
    <property type="evidence" value="ECO:0007669"/>
    <property type="project" value="TreeGrafter"/>
</dbReference>
<dbReference type="GO" id="GO:0004018">
    <property type="term" value="F:N6-(1,2-dicarboxyethyl)AMP AMP-lyase (fumarate-forming) activity"/>
    <property type="evidence" value="ECO:0007669"/>
    <property type="project" value="InterPro"/>
</dbReference>
<dbReference type="GO" id="GO:0044208">
    <property type="term" value="P:'de novo' AMP biosynthetic process"/>
    <property type="evidence" value="ECO:0007669"/>
    <property type="project" value="UniProtKB-UniPathway"/>
</dbReference>
<dbReference type="GO" id="GO:0006189">
    <property type="term" value="P:'de novo' IMP biosynthetic process"/>
    <property type="evidence" value="ECO:0007669"/>
    <property type="project" value="UniProtKB-UniPathway"/>
</dbReference>
<dbReference type="CDD" id="cd01360">
    <property type="entry name" value="Adenylsuccinate_lyase_1"/>
    <property type="match status" value="1"/>
</dbReference>
<dbReference type="FunFam" id="1.10.275.10:FF:000006">
    <property type="entry name" value="Adenylosuccinate lyase"/>
    <property type="match status" value="1"/>
</dbReference>
<dbReference type="FunFam" id="1.10.40.30:FF:000007">
    <property type="entry name" value="Adenylosuccinate lyase"/>
    <property type="match status" value="1"/>
</dbReference>
<dbReference type="FunFam" id="1.20.200.10:FF:000008">
    <property type="entry name" value="Adenylosuccinate lyase"/>
    <property type="match status" value="1"/>
</dbReference>
<dbReference type="Gene3D" id="1.10.40.30">
    <property type="entry name" value="Fumarase/aspartase (C-terminal domain)"/>
    <property type="match status" value="1"/>
</dbReference>
<dbReference type="Gene3D" id="1.20.200.10">
    <property type="entry name" value="Fumarase/aspartase (Central domain)"/>
    <property type="match status" value="1"/>
</dbReference>
<dbReference type="Gene3D" id="1.10.275.10">
    <property type="entry name" value="Fumarase/aspartase (N-terminal domain)"/>
    <property type="match status" value="1"/>
</dbReference>
<dbReference type="InterPro" id="IPR019468">
    <property type="entry name" value="AdenyloSucc_lyase_C"/>
</dbReference>
<dbReference type="InterPro" id="IPR024083">
    <property type="entry name" value="Fumarase/histidase_N"/>
</dbReference>
<dbReference type="InterPro" id="IPR020557">
    <property type="entry name" value="Fumarate_lyase_CS"/>
</dbReference>
<dbReference type="InterPro" id="IPR000362">
    <property type="entry name" value="Fumarate_lyase_fam"/>
</dbReference>
<dbReference type="InterPro" id="IPR022761">
    <property type="entry name" value="Fumarate_lyase_N"/>
</dbReference>
<dbReference type="InterPro" id="IPR008948">
    <property type="entry name" value="L-Aspartase-like"/>
</dbReference>
<dbReference type="InterPro" id="IPR004769">
    <property type="entry name" value="Pur_lyase"/>
</dbReference>
<dbReference type="NCBIfam" id="TIGR00928">
    <property type="entry name" value="purB"/>
    <property type="match status" value="1"/>
</dbReference>
<dbReference type="PANTHER" id="PTHR43172">
    <property type="entry name" value="ADENYLOSUCCINATE LYASE"/>
    <property type="match status" value="1"/>
</dbReference>
<dbReference type="PANTHER" id="PTHR43172:SF1">
    <property type="entry name" value="ADENYLOSUCCINATE LYASE"/>
    <property type="match status" value="1"/>
</dbReference>
<dbReference type="Pfam" id="PF10397">
    <property type="entry name" value="ADSL_C"/>
    <property type="match status" value="1"/>
</dbReference>
<dbReference type="Pfam" id="PF00206">
    <property type="entry name" value="Lyase_1"/>
    <property type="match status" value="1"/>
</dbReference>
<dbReference type="PRINTS" id="PR00145">
    <property type="entry name" value="ARGSUCLYASE"/>
</dbReference>
<dbReference type="PRINTS" id="PR00149">
    <property type="entry name" value="FUMRATELYASE"/>
</dbReference>
<dbReference type="SMART" id="SM00998">
    <property type="entry name" value="ADSL_C"/>
    <property type="match status" value="1"/>
</dbReference>
<dbReference type="SUPFAM" id="SSF48557">
    <property type="entry name" value="L-aspartase-like"/>
    <property type="match status" value="1"/>
</dbReference>
<dbReference type="PROSITE" id="PS00163">
    <property type="entry name" value="FUMARATE_LYASES"/>
    <property type="match status" value="1"/>
</dbReference>
<organism>
    <name type="scientific">Staphylococcus aureus (strain Mu50 / ATCC 700699)</name>
    <dbReference type="NCBI Taxonomy" id="158878"/>
    <lineage>
        <taxon>Bacteria</taxon>
        <taxon>Bacillati</taxon>
        <taxon>Bacillota</taxon>
        <taxon>Bacilli</taxon>
        <taxon>Bacillales</taxon>
        <taxon>Staphylococcaceae</taxon>
        <taxon>Staphylococcus</taxon>
    </lineage>
</organism>
<name>PUR8_STAAM</name>
<comment type="function">
    <text evidence="2">Catalyzes two reactions in de novo purine nucleotide biosynthesis. Catalyzes the breakdown of 5-aminoimidazole- (N-succinylocarboxamide) ribotide (SAICAR or 2-[5-amino-1-(5-phospho-beta-D-ribosyl)imidazole-4-carboxamido]succinate) to 5-aminoimidazole-4-carboxamide ribotide (AICAR or 5-amino-1-(5-phospho-beta-D-ribosyl)imidazole-4-carboxamide) and fumarate, and of adenylosuccinate (ADS or N(6)-(1,2-dicarboxyethyl)-AMP) to adenosine monophosphate (AMP) and fumarate.</text>
</comment>
<comment type="catalytic activity">
    <reaction evidence="2">
        <text>N(6)-(1,2-dicarboxyethyl)-AMP = fumarate + AMP</text>
        <dbReference type="Rhea" id="RHEA:16853"/>
        <dbReference type="ChEBI" id="CHEBI:29806"/>
        <dbReference type="ChEBI" id="CHEBI:57567"/>
        <dbReference type="ChEBI" id="CHEBI:456215"/>
        <dbReference type="EC" id="4.3.2.2"/>
    </reaction>
    <physiologicalReaction direction="left-to-right" evidence="2">
        <dbReference type="Rhea" id="RHEA:16854"/>
    </physiologicalReaction>
</comment>
<comment type="catalytic activity">
    <reaction evidence="2">
        <text>(2S)-2-[5-amino-1-(5-phospho-beta-D-ribosyl)imidazole-4-carboxamido]succinate = 5-amino-1-(5-phospho-beta-D-ribosyl)imidazole-4-carboxamide + fumarate</text>
        <dbReference type="Rhea" id="RHEA:23920"/>
        <dbReference type="ChEBI" id="CHEBI:29806"/>
        <dbReference type="ChEBI" id="CHEBI:58443"/>
        <dbReference type="ChEBI" id="CHEBI:58475"/>
        <dbReference type="EC" id="4.3.2.2"/>
    </reaction>
    <physiologicalReaction direction="left-to-right" evidence="2">
        <dbReference type="Rhea" id="RHEA:23921"/>
    </physiologicalReaction>
</comment>
<comment type="pathway">
    <text>Purine metabolism; AMP biosynthesis via de novo pathway; AMP from IMP: step 2/2.</text>
</comment>
<comment type="pathway">
    <text>Purine metabolism; IMP biosynthesis via de novo pathway; 5-amino-1-(5-phospho-D-ribosyl)imidazole-4-carboxamide from 5-amino-1-(5-phospho-D-ribosyl)imidazole-4-carboxylate: step 2/2.</text>
</comment>
<comment type="subunit">
    <text evidence="1">Homodimer and homotetramer. Residues from neighboring subunits contribute catalytic and substrate-binding residues to each active site (By similarity).</text>
</comment>
<comment type="similarity">
    <text evidence="3">Belongs to the lyase 1 family. Adenylosuccinate lyase subfamily.</text>
</comment>
<feature type="chain" id="PRO_0000259977" description="Adenylosuccinate lyase">
    <location>
        <begin position="1"/>
        <end position="431"/>
    </location>
</feature>
<feature type="active site" description="Proton donor/acceptor" evidence="2">
    <location>
        <position position="141"/>
    </location>
</feature>
<feature type="active site" description="Proton donor/acceptor" evidence="2">
    <location>
        <position position="262"/>
    </location>
</feature>
<feature type="binding site" evidence="2">
    <location>
        <begin position="4"/>
        <end position="5"/>
    </location>
    <ligand>
        <name>N(6)-(1,2-dicarboxyethyl)-AMP</name>
        <dbReference type="ChEBI" id="CHEBI:57567"/>
    </ligand>
</feature>
<feature type="binding site" evidence="2">
    <location>
        <begin position="67"/>
        <end position="69"/>
    </location>
    <ligand>
        <name>N(6)-(1,2-dicarboxyethyl)-AMP</name>
        <dbReference type="ChEBI" id="CHEBI:57567"/>
    </ligand>
</feature>
<feature type="binding site" evidence="2">
    <location>
        <begin position="93"/>
        <end position="94"/>
    </location>
    <ligand>
        <name>N(6)-(1,2-dicarboxyethyl)-AMP</name>
        <dbReference type="ChEBI" id="CHEBI:57567"/>
    </ligand>
</feature>
<feature type="binding site" evidence="2">
    <location>
        <position position="212"/>
    </location>
    <ligand>
        <name>N(6)-(1,2-dicarboxyethyl)-AMP</name>
        <dbReference type="ChEBI" id="CHEBI:57567"/>
    </ligand>
</feature>
<feature type="binding site" evidence="2">
    <location>
        <position position="263"/>
    </location>
    <ligand>
        <name>N(6)-(1,2-dicarboxyethyl)-AMP</name>
        <dbReference type="ChEBI" id="CHEBI:57567"/>
    </ligand>
</feature>
<feature type="binding site" evidence="2">
    <location>
        <begin position="268"/>
        <end position="270"/>
    </location>
    <ligand>
        <name>N(6)-(1,2-dicarboxyethyl)-AMP</name>
        <dbReference type="ChEBI" id="CHEBI:57567"/>
    </ligand>
</feature>
<feature type="binding site" evidence="2">
    <location>
        <position position="276"/>
    </location>
    <ligand>
        <name>N(6)-(1,2-dicarboxyethyl)-AMP</name>
        <dbReference type="ChEBI" id="CHEBI:57567"/>
    </ligand>
</feature>
<feature type="binding site" evidence="2">
    <location>
        <begin position="307"/>
        <end position="311"/>
    </location>
    <ligand>
        <name>N(6)-(1,2-dicarboxyethyl)-AMP</name>
        <dbReference type="ChEBI" id="CHEBI:57567"/>
    </ligand>
</feature>
<keyword id="KW-0456">Lyase</keyword>
<keyword id="KW-0658">Purine biosynthesis</keyword>
<reference key="1">
    <citation type="journal article" date="2001" name="Lancet">
        <title>Whole genome sequencing of meticillin-resistant Staphylococcus aureus.</title>
        <authorList>
            <person name="Kuroda M."/>
            <person name="Ohta T."/>
            <person name="Uchiyama I."/>
            <person name="Baba T."/>
            <person name="Yuzawa H."/>
            <person name="Kobayashi I."/>
            <person name="Cui L."/>
            <person name="Oguchi A."/>
            <person name="Aoki K."/>
            <person name="Nagai Y."/>
            <person name="Lian J.-Q."/>
            <person name="Ito T."/>
            <person name="Kanamori M."/>
            <person name="Matsumaru H."/>
            <person name="Maruyama A."/>
            <person name="Murakami H."/>
            <person name="Hosoyama A."/>
            <person name="Mizutani-Ui Y."/>
            <person name="Takahashi N.K."/>
            <person name="Sawano T."/>
            <person name="Inoue R."/>
            <person name="Kaito C."/>
            <person name="Sekimizu K."/>
            <person name="Hirakawa H."/>
            <person name="Kuhara S."/>
            <person name="Goto S."/>
            <person name="Yabuzaki J."/>
            <person name="Kanehisa M."/>
            <person name="Yamashita A."/>
            <person name="Oshima K."/>
            <person name="Furuya K."/>
            <person name="Yoshino C."/>
            <person name="Shiba T."/>
            <person name="Hattori M."/>
            <person name="Ogasawara N."/>
            <person name="Hayashi H."/>
            <person name="Hiramatsu K."/>
        </authorList>
    </citation>
    <scope>NUCLEOTIDE SEQUENCE [LARGE SCALE GENOMIC DNA]</scope>
    <source>
        <strain>Mu50 / ATCC 700699</strain>
    </source>
</reference>
<protein>
    <recommendedName>
        <fullName>Adenylosuccinate lyase</fullName>
        <shortName>ASL</shortName>
        <ecNumber evidence="2">4.3.2.2</ecNumber>
    </recommendedName>
    <alternativeName>
        <fullName>Adenylosuccinase</fullName>
        <shortName>ASase</shortName>
    </alternativeName>
</protein>
<gene>
    <name type="primary">purB</name>
    <name type="ordered locus">SAV1908</name>
</gene>